<protein>
    <recommendedName>
        <fullName>Zinc finger protein Xfin</fullName>
    </recommendedName>
    <alternativeName>
        <fullName>Xenopus fingers protein</fullName>
        <shortName>Xfin</shortName>
    </alternativeName>
</protein>
<reference key="1">
    <citation type="journal article" date="1987" name="EMBO J.">
        <title>Xfin: an embryonic gene encoding a multifingered protein in Xenopus.</title>
        <authorList>
            <person name="Ruiz i Altaba A."/>
            <person name="Perry-O'Keefe H."/>
            <person name="Melton D.A."/>
        </authorList>
    </citation>
    <scope>NUCLEOTIDE SEQUENCE [MRNA]</scope>
    <scope>DEVELOPMENTAL STAGE</scope>
    <source>
        <tissue>Ovary</tissue>
    </source>
</reference>
<reference key="2">
    <citation type="journal article" date="1991" name="Mech. Dev.">
        <title>A Xenopus multifinger protein, Xfin, is expressed in specialized cell types and is localized in the cytoplasm.</title>
        <authorList>
            <person name="De Lucchini S."/>
            <person name="Rijli F.M."/>
            <person name="Ciliberto G."/>
            <person name="Barsacchi G."/>
        </authorList>
    </citation>
    <scope>SUBCELLULAR LOCATION</scope>
    <scope>TISSUE SPECIFICITY</scope>
</reference>
<reference key="3">
    <citation type="journal article" date="1993" name="Int. J. Dev. Biol.">
        <title>A Zn-finger protein, Xfin, is expressed during cone differentiation in the retina of the frog Xenopus laevis.</title>
        <authorList>
            <person name="Rijli F.M."/>
            <person name="De Lucchini S."/>
            <person name="Ciliberto G."/>
            <person name="Barsacchi G."/>
        </authorList>
    </citation>
    <scope>SUBCELLULAR LOCATION</scope>
    <scope>TISSUE SPECIFICITY</scope>
    <scope>DEVELOPMENTAL STAGE</scope>
</reference>
<reference key="4">
    <citation type="journal article" date="1993" name="Nucleic Acids Res.">
        <title>RNA binding properties and evolutionary conservation of the Xenopus multifinger protein Xfin.</title>
        <authorList>
            <person name="Andreazzoli M."/>
            <person name="de Lucchini S."/>
            <person name="Costa M."/>
            <person name="Barsacchi G."/>
        </authorList>
    </citation>
    <scope>PUTATIVE FUNCTION</scope>
    <scope>RNA-BINDING</scope>
    <scope>SUBCELLULAR LOCATION</scope>
    <scope>PHOSPHORYLATION</scope>
</reference>
<reference key="5">
    <citation type="journal article" date="1989" name="FEBS Lett.">
        <title>Complete assignment of the 1H NMR spectrum of a synthetic zinc finger from Xfin. Sequential resonance assignments and secondary structure.</title>
        <authorList>
            <person name="Lee M.S."/>
            <person name="Cavanagh J."/>
            <person name="Wright P.E."/>
        </authorList>
    </citation>
    <scope>STRUCTURE BY NMR OF A FINGER</scope>
</reference>
<reference key="6">
    <citation type="journal article" date="1989" name="Science">
        <title>Three-dimensional solution structure of a single zinc finger DNA-binding domain.</title>
        <authorList>
            <person name="Lee M.S."/>
            <person name="Gippert G.P."/>
            <person name="Soman K.V."/>
            <person name="Case D.A."/>
            <person name="Wright P.E."/>
        </authorList>
    </citation>
    <scope>STRUCTURE BY NMR OF FINGER 31</scope>
</reference>
<dbReference type="EMBL" id="X06021">
    <property type="protein sequence ID" value="CAA29425.1"/>
    <property type="molecule type" value="mRNA"/>
</dbReference>
<dbReference type="PIR" id="S00647">
    <property type="entry name" value="S00647"/>
</dbReference>
<dbReference type="RefSeq" id="NP_001095247.1">
    <property type="nucleotide sequence ID" value="NM_001101777.1"/>
</dbReference>
<dbReference type="PDB" id="1ZNF">
    <property type="method" value="NMR"/>
    <property type="chains" value="A=1044-1068"/>
</dbReference>
<dbReference type="PDBsum" id="1ZNF"/>
<dbReference type="SMR" id="P08045"/>
<dbReference type="GeneID" id="397958"/>
<dbReference type="KEGG" id="xla:397958"/>
<dbReference type="AGR" id="Xenbase:XB-GENE-6252152"/>
<dbReference type="CTD" id="397958"/>
<dbReference type="Xenbase" id="XB-GENE-6252152">
    <property type="gene designation" value="znf208.L"/>
</dbReference>
<dbReference type="OrthoDB" id="9411774at2759"/>
<dbReference type="EvolutionaryTrace" id="P08045"/>
<dbReference type="Proteomes" id="UP000186698">
    <property type="component" value="Chromosome 6L"/>
</dbReference>
<dbReference type="Bgee" id="397958">
    <property type="expression patterns" value="Expressed in testis and 14 other cell types or tissues"/>
</dbReference>
<dbReference type="GO" id="GO:0005737">
    <property type="term" value="C:cytoplasm"/>
    <property type="evidence" value="ECO:0007669"/>
    <property type="project" value="UniProtKB-SubCell"/>
</dbReference>
<dbReference type="GO" id="GO:0000981">
    <property type="term" value="F:DNA-binding transcription factor activity, RNA polymerase II-specific"/>
    <property type="evidence" value="ECO:0007669"/>
    <property type="project" value="TreeGrafter"/>
</dbReference>
<dbReference type="GO" id="GO:0003723">
    <property type="term" value="F:RNA binding"/>
    <property type="evidence" value="ECO:0007669"/>
    <property type="project" value="UniProtKB-KW"/>
</dbReference>
<dbReference type="GO" id="GO:0000978">
    <property type="term" value="F:RNA polymerase II cis-regulatory region sequence-specific DNA binding"/>
    <property type="evidence" value="ECO:0007669"/>
    <property type="project" value="TreeGrafter"/>
</dbReference>
<dbReference type="GO" id="GO:0008270">
    <property type="term" value="F:zinc ion binding"/>
    <property type="evidence" value="ECO:0007669"/>
    <property type="project" value="UniProtKB-KW"/>
</dbReference>
<dbReference type="FunFam" id="3.30.160.60:FF:000383">
    <property type="entry name" value="Uncharacterized protein"/>
    <property type="match status" value="1"/>
</dbReference>
<dbReference type="FunFam" id="3.30.160.60:FF:003288">
    <property type="entry name" value="Uncharacterized protein"/>
    <property type="match status" value="1"/>
</dbReference>
<dbReference type="FunFam" id="3.30.160.60:FF:001732">
    <property type="entry name" value="Zgc:162936"/>
    <property type="match status" value="1"/>
</dbReference>
<dbReference type="FunFam" id="3.30.160.60:FF:002169">
    <property type="entry name" value="Zgc:174573"/>
    <property type="match status" value="1"/>
</dbReference>
<dbReference type="FunFam" id="3.30.160.60:FF:000151">
    <property type="entry name" value="Zinc finger and SCAN domain-containing 21"/>
    <property type="match status" value="1"/>
</dbReference>
<dbReference type="FunFam" id="3.30.160.60:FF:000557">
    <property type="entry name" value="zinc finger and SCAN domain-containing protein 29"/>
    <property type="match status" value="1"/>
</dbReference>
<dbReference type="FunFam" id="3.30.160.60:FF:000446">
    <property type="entry name" value="Zinc finger protein"/>
    <property type="match status" value="1"/>
</dbReference>
<dbReference type="FunFam" id="3.30.160.60:FF:001872">
    <property type="entry name" value="Zinc finger protein"/>
    <property type="match status" value="1"/>
</dbReference>
<dbReference type="FunFam" id="3.30.160.60:FF:000002">
    <property type="entry name" value="Zinc finger protein 1 homolog"/>
    <property type="match status" value="1"/>
</dbReference>
<dbReference type="FunFam" id="3.30.160.60:FF:000218">
    <property type="entry name" value="Zinc finger protein 10"/>
    <property type="match status" value="1"/>
</dbReference>
<dbReference type="FunFam" id="3.30.160.60:FF:000295">
    <property type="entry name" value="zinc finger protein 19"/>
    <property type="match status" value="1"/>
</dbReference>
<dbReference type="FunFam" id="3.30.160.60:FF:000358">
    <property type="entry name" value="zinc finger protein 24"/>
    <property type="match status" value="1"/>
</dbReference>
<dbReference type="FunFam" id="3.30.160.60:FF:001049">
    <property type="entry name" value="zinc finger protein 319"/>
    <property type="match status" value="1"/>
</dbReference>
<dbReference type="FunFam" id="3.30.160.60:FF:002343">
    <property type="entry name" value="Zinc finger protein 33A"/>
    <property type="match status" value="9"/>
</dbReference>
<dbReference type="FunFam" id="3.30.160.60:FF:000690">
    <property type="entry name" value="Zinc finger protein 354C"/>
    <property type="match status" value="1"/>
</dbReference>
<dbReference type="FunFam" id="3.30.160.60:FF:000135">
    <property type="entry name" value="Zinc finger protein 358"/>
    <property type="match status" value="2"/>
</dbReference>
<dbReference type="FunFam" id="3.30.160.60:FF:000342">
    <property type="entry name" value="zinc finger protein 394"/>
    <property type="match status" value="1"/>
</dbReference>
<dbReference type="FunFam" id="3.30.160.60:FF:000303">
    <property type="entry name" value="Zinc finger protein 41"/>
    <property type="match status" value="1"/>
</dbReference>
<dbReference type="FunFam" id="3.30.160.60:FF:000340">
    <property type="entry name" value="zinc finger protein 473 isoform X1"/>
    <property type="match status" value="1"/>
</dbReference>
<dbReference type="FunFam" id="3.30.160.60:FF:000431">
    <property type="entry name" value="zinc finger protein 629 isoform X2"/>
    <property type="match status" value="1"/>
</dbReference>
<dbReference type="FunFam" id="3.30.160.60:FF:000912">
    <property type="entry name" value="Zinc finger protein 660"/>
    <property type="match status" value="1"/>
</dbReference>
<dbReference type="FunFam" id="3.30.160.60:FF:001442">
    <property type="entry name" value="zinc finger protein 696"/>
    <property type="match status" value="1"/>
</dbReference>
<dbReference type="FunFam" id="3.30.160.60:FF:000290">
    <property type="entry name" value="Zinc finger protein 697 isoform X1"/>
    <property type="match status" value="1"/>
</dbReference>
<dbReference type="FunFam" id="3.30.160.60:FF:001016">
    <property type="entry name" value="zinc finger protein 850-like"/>
    <property type="match status" value="1"/>
</dbReference>
<dbReference type="FunFam" id="3.30.160.60:FF:000110">
    <property type="entry name" value="Zinc finger protein-like"/>
    <property type="match status" value="1"/>
</dbReference>
<dbReference type="Gene3D" id="3.30.160.60">
    <property type="entry name" value="Classic Zinc Finger"/>
    <property type="match status" value="35"/>
</dbReference>
<dbReference type="InterPro" id="IPR050752">
    <property type="entry name" value="C2H2-ZF_domain"/>
</dbReference>
<dbReference type="InterPro" id="IPR001909">
    <property type="entry name" value="KRAB"/>
</dbReference>
<dbReference type="InterPro" id="IPR036051">
    <property type="entry name" value="KRAB_dom_sf"/>
</dbReference>
<dbReference type="InterPro" id="IPR036236">
    <property type="entry name" value="Znf_C2H2_sf"/>
</dbReference>
<dbReference type="InterPro" id="IPR013087">
    <property type="entry name" value="Znf_C2H2_type"/>
</dbReference>
<dbReference type="PANTHER" id="PTHR24384">
    <property type="entry name" value="FINGER PUTATIVE TRANSCRIPTION FACTOR FAMILY-RELATED"/>
    <property type="match status" value="1"/>
</dbReference>
<dbReference type="PANTHER" id="PTHR24384:SF218">
    <property type="entry name" value="ZINC FINGER PROTEIN 502"/>
    <property type="match status" value="1"/>
</dbReference>
<dbReference type="Pfam" id="PF00096">
    <property type="entry name" value="zf-C2H2"/>
    <property type="match status" value="33"/>
</dbReference>
<dbReference type="Pfam" id="PF13912">
    <property type="entry name" value="zf-C2H2_6"/>
    <property type="match status" value="1"/>
</dbReference>
<dbReference type="SMART" id="SM00349">
    <property type="entry name" value="KRAB"/>
    <property type="match status" value="1"/>
</dbReference>
<dbReference type="SMART" id="SM00355">
    <property type="entry name" value="ZnF_C2H2"/>
    <property type="match status" value="37"/>
</dbReference>
<dbReference type="SUPFAM" id="SSF57667">
    <property type="entry name" value="beta-beta-alpha zinc fingers"/>
    <property type="match status" value="22"/>
</dbReference>
<dbReference type="SUPFAM" id="SSF109640">
    <property type="entry name" value="KRAB domain (Kruppel-associated box)"/>
    <property type="match status" value="1"/>
</dbReference>
<dbReference type="PROSITE" id="PS50805">
    <property type="entry name" value="KRAB"/>
    <property type="match status" value="1"/>
</dbReference>
<dbReference type="PROSITE" id="PS00028">
    <property type="entry name" value="ZINC_FINGER_C2H2_1"/>
    <property type="match status" value="35"/>
</dbReference>
<dbReference type="PROSITE" id="PS50157">
    <property type="entry name" value="ZINC_FINGER_C2H2_2"/>
    <property type="match status" value="37"/>
</dbReference>
<organism>
    <name type="scientific">Xenopus laevis</name>
    <name type="common">African clawed frog</name>
    <dbReference type="NCBI Taxonomy" id="8355"/>
    <lineage>
        <taxon>Eukaryota</taxon>
        <taxon>Metazoa</taxon>
        <taxon>Chordata</taxon>
        <taxon>Craniata</taxon>
        <taxon>Vertebrata</taxon>
        <taxon>Euteleostomi</taxon>
        <taxon>Amphibia</taxon>
        <taxon>Batrachia</taxon>
        <taxon>Anura</taxon>
        <taxon>Pipoidea</taxon>
        <taxon>Pipidae</taxon>
        <taxon>Xenopodinae</taxon>
        <taxon>Xenopus</taxon>
        <taxon>Xenopus</taxon>
    </lineage>
</organism>
<accession>P08045</accession>
<proteinExistence type="evidence at protein level"/>
<name>XFIN_XENLA</name>
<comment type="function">
    <text>Binds to poly-G sequences in RNA. May function in post-translational regulation processes.</text>
</comment>
<comment type="subcellular location">
    <subcellularLocation>
        <location evidence="4 6 7">Cytoplasm</location>
    </subcellularLocation>
</comment>
<comment type="tissue specificity">
    <text evidence="4 7">Expressed in oocytes, and in specialized cell types such as neural retina cones in adults.</text>
</comment>
<comment type="developmental stage">
    <text evidence="5 7">Expressed both maternally and zygotically throughout oogenesis and embryogenesis through to at least the tadpole stage. Also expressed in adults.</text>
</comment>
<comment type="PTM">
    <text evidence="6">Phosphorylated. Phosphorylation enhances RNA binding.</text>
</comment>
<comment type="similarity">
    <text evidence="8">Belongs to the krueppel C2H2-type zinc-finger protein family.</text>
</comment>
<sequence>MEEPKCLQREMYKSVMTENYQCVLSLGYPIRKPEIVSMMEVGEELWSKNDSARPGQKEVEGETPKESDWAAENCKRAQMHKEVLDLDTLAAVKSEPVEEGSNSAKKSHICSHYGKLFSCYAAVVRHQRMHQLQKSHHCPHCKKSFVQRSDFIKHQRTHTGERPYQCVECQKKFTERSALVNHQRTHTGERPYTCLDCQKTFNQRSALTKHRRTHTGERPYRCSVCSKSFIQNSDLVKHLRTHTGEKPYECPLCVKRFAESSALMKHKRTHSTHRPFRCSECSRSFTHNSDLTAHMRKHTEFRNVLNLDSVVGTDPLSSQNVASSPYSCSKCRKTFKRWKSFLNHQQTHSREKPYLCSHCNKGFIQNSDLVKHFRTHTGERPYQCAECHKGFIQKSDLVKHLRTHTGEKPFKCSHCDKKFTERSALAKHQRTHTGEKPYKCSDCGKEFTQRSNLILHQRIHTGERPYKCTLCDRTFIQNSDLVKHQKVHANLPLSDPHTANSPHKCSKCDLTFSHWSTFMKHSKLHSGEKKFQCAECKKGFTQKSDLVKHIRVHTGEKPFKCLLCKKSFSQNSDLHKHWRIHTGEKPFPCYTCDKSFTERSALIKHHRTHTGERPHKCSVCQKGFIQKSALTKHSRTHTGEKPYPCTQCGKSFIQNSDLVKHQRIHTGEKPYHCTECNKRFTEGSSLVKHRRTHSGEKPYRCPQCEKTFIQSSDLVKHLVVHNGENPPAATAFHEILIRRENLTRSEPDPYPCTECGKVFHQRPALLKHLRTHKTEKRYPCNECDKSFFQTSDLVKHLRTHTGERPYHCPECNKGFIQNSDLVKHQRTHTGERPYTCSQCDKGFIQRSALTKHMRTHTGEKPYKCEQCQKCFIQNSDLVKHQRIHTGEKPYHCPDCDKRFTEGSSLIKHQRIHSRIKPYPCGVCGKSFSQSSNLLKHLKCHSEQNPPVALSSELGFVAETQTHPDPVDHIVYGDTASYISPEAAGERSFKCNDCGKCFAHRSVLIKHVRIHTGERPYKCSQCTRSFIQKSDLVKHYRTHTGERPYKCGLCERSFVEKSALSRHQRVHKNESPVLNSAMEQQQVTYWGESKDDPNSLVPQLHVIKEEESPHIVNAYSPLSILQSYFPPILEPKGTPRYSCSECGKCFTHRSVFLKHWRMHTGEQPYTCKECGKSFSQSSALVKHVRIHTGEKPYPCSTCGKSFIQKSDLAKHQRIHTGEKPYTCTVCGKKFIDRSSVVKHSRTHTGERPYKCNECTKGFVQKSDLVKHMRTHTGEKPYGCNCCDRSFSTHSASVRHQRMCNTGRPYQDEEYENSLFYSADITWKGDYAQLLQIPCGLEEPMKAIGWISEVAL</sequence>
<evidence type="ECO:0000255" key="1">
    <source>
        <dbReference type="PROSITE-ProRule" id="PRU00042"/>
    </source>
</evidence>
<evidence type="ECO:0000255" key="2">
    <source>
        <dbReference type="PROSITE-ProRule" id="PRU00119"/>
    </source>
</evidence>
<evidence type="ECO:0000256" key="3">
    <source>
        <dbReference type="SAM" id="MobiDB-lite"/>
    </source>
</evidence>
<evidence type="ECO:0000269" key="4">
    <source>
    </source>
</evidence>
<evidence type="ECO:0000269" key="5">
    <source>
    </source>
</evidence>
<evidence type="ECO:0000269" key="6">
    <source>
    </source>
</evidence>
<evidence type="ECO:0000269" key="7">
    <source>
    </source>
</evidence>
<evidence type="ECO:0000305" key="8"/>
<evidence type="ECO:0007829" key="9">
    <source>
        <dbReference type="PDB" id="1ZNF"/>
    </source>
</evidence>
<keyword id="KW-0002">3D-structure</keyword>
<keyword id="KW-0963">Cytoplasm</keyword>
<keyword id="KW-0479">Metal-binding</keyword>
<keyword id="KW-0597">Phosphoprotein</keyword>
<keyword id="KW-1185">Reference proteome</keyword>
<keyword id="KW-0677">Repeat</keyword>
<keyword id="KW-0694">RNA-binding</keyword>
<keyword id="KW-0862">Zinc</keyword>
<keyword id="KW-0863">Zinc-finger</keyword>
<feature type="chain" id="PRO_0000047087" description="Zinc finger protein Xfin">
    <location>
        <begin position="1"/>
        <end position="1350"/>
    </location>
</feature>
<feature type="domain" description="KRAB" evidence="2">
    <location>
        <begin position="1"/>
        <end position="58"/>
    </location>
</feature>
<feature type="zinc finger region" description="C2H2-type 1" evidence="1">
    <location>
        <begin position="108"/>
        <end position="130"/>
    </location>
</feature>
<feature type="zinc finger region" description="C2H2-type 2" evidence="1">
    <location>
        <begin position="136"/>
        <end position="158"/>
    </location>
</feature>
<feature type="zinc finger region" description="C2H2-type 3" evidence="1">
    <location>
        <begin position="164"/>
        <end position="186"/>
    </location>
</feature>
<feature type="zinc finger region" description="C2H2-type 4" evidence="1">
    <location>
        <begin position="192"/>
        <end position="214"/>
    </location>
</feature>
<feature type="zinc finger region" description="C2H2-type 5" evidence="1">
    <location>
        <begin position="220"/>
        <end position="242"/>
    </location>
</feature>
<feature type="zinc finger region" description="C2H2-type 6" evidence="1">
    <location>
        <begin position="248"/>
        <end position="270"/>
    </location>
</feature>
<feature type="zinc finger region" description="C2H2-type 7" evidence="1">
    <location>
        <begin position="276"/>
        <end position="298"/>
    </location>
</feature>
<feature type="zinc finger region" description="C2H2-type 8" evidence="1">
    <location>
        <begin position="326"/>
        <end position="348"/>
    </location>
</feature>
<feature type="zinc finger region" description="C2H2-type 9" evidence="1">
    <location>
        <begin position="354"/>
        <end position="376"/>
    </location>
</feature>
<feature type="zinc finger region" description="C2H2-type 10" evidence="1">
    <location>
        <begin position="382"/>
        <end position="404"/>
    </location>
</feature>
<feature type="zinc finger region" description="C2H2-type 11" evidence="1">
    <location>
        <begin position="410"/>
        <end position="432"/>
    </location>
</feature>
<feature type="zinc finger region" description="C2H2-type 12" evidence="1">
    <location>
        <begin position="438"/>
        <end position="460"/>
    </location>
</feature>
<feature type="zinc finger region" description="C2H2-type 13" evidence="1">
    <location>
        <begin position="466"/>
        <end position="488"/>
    </location>
</feature>
<feature type="zinc finger region" description="C2H2-type 14" evidence="1">
    <location>
        <begin position="503"/>
        <end position="525"/>
    </location>
</feature>
<feature type="zinc finger region" description="C2H2-type 15" evidence="1">
    <location>
        <begin position="531"/>
        <end position="553"/>
    </location>
</feature>
<feature type="zinc finger region" description="C2H2-type 16" evidence="1">
    <location>
        <begin position="559"/>
        <end position="581"/>
    </location>
</feature>
<feature type="zinc finger region" description="C2H2-type 17" evidence="1">
    <location>
        <begin position="587"/>
        <end position="609"/>
    </location>
</feature>
<feature type="zinc finger region" description="C2H2-type 18" evidence="1">
    <location>
        <begin position="615"/>
        <end position="637"/>
    </location>
</feature>
<feature type="zinc finger region" description="C2H2-type 19" evidence="1">
    <location>
        <begin position="643"/>
        <end position="665"/>
    </location>
</feature>
<feature type="zinc finger region" description="C2H2-type 20" evidence="1">
    <location>
        <begin position="671"/>
        <end position="693"/>
    </location>
</feature>
<feature type="zinc finger region" description="C2H2-type 21" evidence="1">
    <location>
        <begin position="699"/>
        <end position="721"/>
    </location>
</feature>
<feature type="zinc finger region" description="C2H2-type 22" evidence="1">
    <location>
        <begin position="750"/>
        <end position="772"/>
    </location>
</feature>
<feature type="zinc finger region" description="C2H2-type 23" evidence="1">
    <location>
        <begin position="778"/>
        <end position="800"/>
    </location>
</feature>
<feature type="zinc finger region" description="C2H2-type 24" evidence="1">
    <location>
        <begin position="806"/>
        <end position="828"/>
    </location>
</feature>
<feature type="zinc finger region" description="C2H2-type 25" evidence="1">
    <location>
        <begin position="834"/>
        <end position="856"/>
    </location>
</feature>
<feature type="zinc finger region" description="C2H2-type 26" evidence="1">
    <location>
        <begin position="862"/>
        <end position="884"/>
    </location>
</feature>
<feature type="zinc finger region" description="C2H2-type 27" evidence="1">
    <location>
        <begin position="890"/>
        <end position="912"/>
    </location>
</feature>
<feature type="zinc finger region" description="C2H2-type 28" evidence="1">
    <location>
        <begin position="918"/>
        <end position="940"/>
    </location>
</feature>
<feature type="zinc finger region" description="C2H2-type 29" evidence="1">
    <location>
        <begin position="988"/>
        <end position="1010"/>
    </location>
</feature>
<feature type="zinc finger region" description="C2H2-type 30" evidence="1">
    <location>
        <begin position="1016"/>
        <end position="1038"/>
    </location>
</feature>
<feature type="zinc finger region" description="C2H2-type 31" evidence="1">
    <location>
        <begin position="1044"/>
        <end position="1066"/>
    </location>
</feature>
<feature type="zinc finger region" description="C2H2-type 32" evidence="1">
    <location>
        <begin position="1136"/>
        <end position="1158"/>
    </location>
</feature>
<feature type="zinc finger region" description="C2H2-type 33" evidence="1">
    <location>
        <begin position="1164"/>
        <end position="1186"/>
    </location>
</feature>
<feature type="zinc finger region" description="C2H2-type 34" evidence="1">
    <location>
        <begin position="1192"/>
        <end position="1214"/>
    </location>
</feature>
<feature type="zinc finger region" description="C2H2-type 35" evidence="1">
    <location>
        <begin position="1220"/>
        <end position="1242"/>
    </location>
</feature>
<feature type="zinc finger region" description="C2H2-type 36" evidence="1">
    <location>
        <begin position="1248"/>
        <end position="1270"/>
    </location>
</feature>
<feature type="zinc finger region" description="C2H2-type 37" evidence="1">
    <location>
        <begin position="1276"/>
        <end position="1298"/>
    </location>
</feature>
<feature type="region of interest" description="Disordered" evidence="3">
    <location>
        <begin position="47"/>
        <end position="68"/>
    </location>
</feature>
<feature type="strand" evidence="9">
    <location>
        <begin position="1047"/>
        <end position="1049"/>
    </location>
</feature>
<feature type="helix" evidence="9">
    <location>
        <begin position="1056"/>
        <end position="1062"/>
    </location>
</feature>
<feature type="helix" evidence="9">
    <location>
        <begin position="1063"/>
        <end position="1065"/>
    </location>
</feature>